<sequence length="468" mass="50696">MAFATINSSAIPPATPSSIPTIEHAFASEPSLRKRVYDAIGATPQYIPLFEDIARYTSSLLARNATSTAPPAEASADGPAAKKRKIQNGDVSGTPQSLGDLKADAELQFHMRDVSFAMPQRKKLTLEVTAGGGFLRARNQTSKEVEFGVPVEKIQHVLCLPVPEKNQRQFNFCVIPQNGDGINTPAGGEAAPESIVWTVADGPPKSEFSINGQAVAGGAGGESAEKVVLRVLNDALTQTKVIRPDDREFVSAMPEAHRKGEKAYHVKAFRGSKEGYLFFLSTGILFGFKKPLIFFAFENIDSVSYTSVLQRTFNLNIMARATAGGEPQEFELSMIDQADFSGIDAYIKTHGLQDASLAEERRAKRYNINGKTEEAAAAANGDETAEEESELQKAQRELEDQEDEEEEDYDPGSDGDSDGSGSSSDDDDDDDDEHQDDEDDMDEDEDGEQDLVAAELGSQAADIPEDQV</sequence>
<comment type="function">
    <text evidence="1">Histones H3 and H4 chaperone involved in the nucleosome formation and heterochromatin silencing. Required for the deposition of H3K56ac-carrying H3-H4 complex onto newly-replicated DNA. Plays a role in the transcriptional regulation of the cell-cycle dependent histone genes by creating a repressive structure at the core histone gene promoter (By similarity).</text>
</comment>
<comment type="subunit">
    <text evidence="1">Interacts with histones H3 and H4.</text>
</comment>
<comment type="subcellular location">
    <subcellularLocation>
        <location evidence="1">Nucleus</location>
    </subcellularLocation>
    <subcellularLocation>
        <location evidence="1">Chromosome</location>
    </subcellularLocation>
</comment>
<comment type="similarity">
    <text evidence="3">Belongs to the RTT106 family.</text>
</comment>
<gene>
    <name type="primary">rtt106</name>
    <name type="ORF">ATEG_02913</name>
</gene>
<name>RT106_ASPTN</name>
<organism>
    <name type="scientific">Aspergillus terreus (strain NIH 2624 / FGSC A1156)</name>
    <dbReference type="NCBI Taxonomy" id="341663"/>
    <lineage>
        <taxon>Eukaryota</taxon>
        <taxon>Fungi</taxon>
        <taxon>Dikarya</taxon>
        <taxon>Ascomycota</taxon>
        <taxon>Pezizomycotina</taxon>
        <taxon>Eurotiomycetes</taxon>
        <taxon>Eurotiomycetidae</taxon>
        <taxon>Eurotiales</taxon>
        <taxon>Aspergillaceae</taxon>
        <taxon>Aspergillus</taxon>
        <taxon>Aspergillus subgen. Circumdati</taxon>
    </lineage>
</organism>
<accession>Q0CTS1</accession>
<keyword id="KW-0143">Chaperone</keyword>
<keyword id="KW-0158">Chromosome</keyword>
<keyword id="KW-0238">DNA-binding</keyword>
<keyword id="KW-0539">Nucleus</keyword>
<keyword id="KW-1185">Reference proteome</keyword>
<keyword id="KW-0804">Transcription</keyword>
<keyword id="KW-0805">Transcription regulation</keyword>
<proteinExistence type="inferred from homology"/>
<dbReference type="EMBL" id="CH476597">
    <property type="protein sequence ID" value="EAU36187.1"/>
    <property type="molecule type" value="Genomic_DNA"/>
</dbReference>
<dbReference type="RefSeq" id="XP_001212091.1">
    <property type="nucleotide sequence ID" value="XM_001212091.1"/>
</dbReference>
<dbReference type="SMR" id="Q0CTS1"/>
<dbReference type="STRING" id="341663.Q0CTS1"/>
<dbReference type="EnsemblFungi" id="EAU36187">
    <property type="protein sequence ID" value="EAU36187"/>
    <property type="gene ID" value="ATEG_02913"/>
</dbReference>
<dbReference type="GeneID" id="4317477"/>
<dbReference type="VEuPathDB" id="FungiDB:ATEG_02913"/>
<dbReference type="eggNOG" id="ENOG502R9PE">
    <property type="taxonomic scope" value="Eukaryota"/>
</dbReference>
<dbReference type="HOGENOM" id="CLU_033828_0_0_1"/>
<dbReference type="OMA" id="AMPEAHR"/>
<dbReference type="OrthoDB" id="75754at2759"/>
<dbReference type="Proteomes" id="UP000007963">
    <property type="component" value="Unassembled WGS sequence"/>
</dbReference>
<dbReference type="GO" id="GO:0005694">
    <property type="term" value="C:chromosome"/>
    <property type="evidence" value="ECO:0007669"/>
    <property type="project" value="UniProtKB-SubCell"/>
</dbReference>
<dbReference type="GO" id="GO:0005634">
    <property type="term" value="C:nucleus"/>
    <property type="evidence" value="ECO:0007669"/>
    <property type="project" value="UniProtKB-SubCell"/>
</dbReference>
<dbReference type="GO" id="GO:0003677">
    <property type="term" value="F:DNA binding"/>
    <property type="evidence" value="ECO:0007669"/>
    <property type="project" value="UniProtKB-KW"/>
</dbReference>
<dbReference type="GO" id="GO:0042393">
    <property type="term" value="F:histone binding"/>
    <property type="evidence" value="ECO:0007669"/>
    <property type="project" value="TreeGrafter"/>
</dbReference>
<dbReference type="GO" id="GO:0031491">
    <property type="term" value="F:nucleosome binding"/>
    <property type="evidence" value="ECO:0007669"/>
    <property type="project" value="TreeGrafter"/>
</dbReference>
<dbReference type="Gene3D" id="2.30.29.120">
    <property type="match status" value="1"/>
</dbReference>
<dbReference type="Gene3D" id="2.30.29.30">
    <property type="entry name" value="Pleckstrin-homology domain (PH domain)/Phosphotyrosine-binding domain (PTB)"/>
    <property type="match status" value="1"/>
</dbReference>
<dbReference type="InterPro" id="IPR011993">
    <property type="entry name" value="PH-like_dom_sf"/>
</dbReference>
<dbReference type="InterPro" id="IPR013719">
    <property type="entry name" value="RTT106/SPT16-like_middle_dom"/>
</dbReference>
<dbReference type="InterPro" id="IPR050454">
    <property type="entry name" value="RTT106/SSRP1_HistChap/FACT"/>
</dbReference>
<dbReference type="PANTHER" id="PTHR45849">
    <property type="entry name" value="FACT COMPLEX SUBUNIT SSRP1"/>
    <property type="match status" value="1"/>
</dbReference>
<dbReference type="PANTHER" id="PTHR45849:SF3">
    <property type="entry name" value="HISTONE CHAPERONE RTT106"/>
    <property type="match status" value="1"/>
</dbReference>
<dbReference type="Pfam" id="PF08512">
    <property type="entry name" value="Rttp106-like_middle"/>
    <property type="match status" value="1"/>
</dbReference>
<dbReference type="SMART" id="SM01287">
    <property type="entry name" value="Rtt106"/>
    <property type="match status" value="1"/>
</dbReference>
<dbReference type="SUPFAM" id="SSF50729">
    <property type="entry name" value="PH domain-like"/>
    <property type="match status" value="1"/>
</dbReference>
<reference key="1">
    <citation type="submission" date="2005-09" db="EMBL/GenBank/DDBJ databases">
        <title>Annotation of the Aspergillus terreus NIH2624 genome.</title>
        <authorList>
            <person name="Birren B.W."/>
            <person name="Lander E.S."/>
            <person name="Galagan J.E."/>
            <person name="Nusbaum C."/>
            <person name="Devon K."/>
            <person name="Henn M."/>
            <person name="Ma L.-J."/>
            <person name="Jaffe D.B."/>
            <person name="Butler J."/>
            <person name="Alvarez P."/>
            <person name="Gnerre S."/>
            <person name="Grabherr M."/>
            <person name="Kleber M."/>
            <person name="Mauceli E.W."/>
            <person name="Brockman W."/>
            <person name="Rounsley S."/>
            <person name="Young S.K."/>
            <person name="LaButti K."/>
            <person name="Pushparaj V."/>
            <person name="DeCaprio D."/>
            <person name="Crawford M."/>
            <person name="Koehrsen M."/>
            <person name="Engels R."/>
            <person name="Montgomery P."/>
            <person name="Pearson M."/>
            <person name="Howarth C."/>
            <person name="Larson L."/>
            <person name="Luoma S."/>
            <person name="White J."/>
            <person name="Alvarado L."/>
            <person name="Kodira C.D."/>
            <person name="Zeng Q."/>
            <person name="Oleary S."/>
            <person name="Yandava C."/>
            <person name="Denning D.W."/>
            <person name="Nierman W.C."/>
            <person name="Milne T."/>
            <person name="Madden K."/>
        </authorList>
    </citation>
    <scope>NUCLEOTIDE SEQUENCE [LARGE SCALE GENOMIC DNA]</scope>
    <source>
        <strain>NIH 2624 / FGSC A1156</strain>
    </source>
</reference>
<protein>
    <recommendedName>
        <fullName>Histone chaperone rtt106</fullName>
    </recommendedName>
</protein>
<feature type="chain" id="PRO_0000320486" description="Histone chaperone rtt106">
    <location>
        <begin position="1"/>
        <end position="468"/>
    </location>
</feature>
<feature type="region of interest" description="Disordered" evidence="2">
    <location>
        <begin position="67"/>
        <end position="99"/>
    </location>
</feature>
<feature type="region of interest" description="Disordered" evidence="2">
    <location>
        <begin position="368"/>
        <end position="468"/>
    </location>
</feature>
<feature type="compositionally biased region" description="Low complexity" evidence="2">
    <location>
        <begin position="67"/>
        <end position="76"/>
    </location>
</feature>
<feature type="compositionally biased region" description="Acidic residues" evidence="2">
    <location>
        <begin position="399"/>
        <end position="417"/>
    </location>
</feature>
<feature type="compositionally biased region" description="Acidic residues" evidence="2">
    <location>
        <begin position="424"/>
        <end position="449"/>
    </location>
</feature>
<evidence type="ECO:0000250" key="1"/>
<evidence type="ECO:0000256" key="2">
    <source>
        <dbReference type="SAM" id="MobiDB-lite"/>
    </source>
</evidence>
<evidence type="ECO:0000305" key="3"/>